<evidence type="ECO:0000255" key="1">
    <source>
        <dbReference type="PROSITE-ProRule" id="PRU00649"/>
    </source>
</evidence>
<evidence type="ECO:0000256" key="2">
    <source>
        <dbReference type="SAM" id="MobiDB-lite"/>
    </source>
</evidence>
<evidence type="ECO:0000269" key="3">
    <source>
    </source>
</evidence>
<evidence type="ECO:0000269" key="4">
    <source>
    </source>
</evidence>
<evidence type="ECO:0000269" key="5">
    <source>
    </source>
</evidence>
<evidence type="ECO:0000269" key="6">
    <source>
    </source>
</evidence>
<evidence type="ECO:0000269" key="7">
    <source>
    </source>
</evidence>
<evidence type="ECO:0000305" key="8"/>
<evidence type="ECO:0007744" key="9">
    <source>
    </source>
</evidence>
<evidence type="ECO:0007744" key="10">
    <source>
    </source>
</evidence>
<evidence type="ECO:0007744" key="11">
    <source>
    </source>
</evidence>
<evidence type="ECO:0007744" key="12">
    <source>
    </source>
</evidence>
<evidence type="ECO:0007829" key="13">
    <source>
        <dbReference type="PDB" id="3NFQ"/>
    </source>
</evidence>
<evidence type="ECO:0007829" key="14">
    <source>
        <dbReference type="PDB" id="3OAK"/>
    </source>
</evidence>
<dbReference type="EMBL" id="U40829">
    <property type="protein sequence ID" value="AAB68274.1"/>
    <property type="molecule type" value="Genomic_DNA"/>
</dbReference>
<dbReference type="EMBL" id="AY558069">
    <property type="protein sequence ID" value="AAS56395.1"/>
    <property type="molecule type" value="Genomic_DNA"/>
</dbReference>
<dbReference type="EMBL" id="BK006949">
    <property type="protein sequence ID" value="DAA11545.1"/>
    <property type="molecule type" value="Genomic_DNA"/>
</dbReference>
<dbReference type="PIR" id="S69023">
    <property type="entry name" value="S69023"/>
</dbReference>
<dbReference type="RefSeq" id="NP_015458.1">
    <property type="nucleotide sequence ID" value="NM_001184230.1"/>
</dbReference>
<dbReference type="PDB" id="3NFQ">
    <property type="method" value="X-ray"/>
    <property type="resolution" value="1.85 A"/>
    <property type="chains" value="A/B=141-310"/>
</dbReference>
<dbReference type="PDB" id="3O8Z">
    <property type="method" value="X-ray"/>
    <property type="resolution" value="2.15 A"/>
    <property type="chains" value="A=148-295"/>
</dbReference>
<dbReference type="PDB" id="3OAK">
    <property type="method" value="X-ray"/>
    <property type="resolution" value="2.15 A"/>
    <property type="chains" value="A/B=148-292"/>
</dbReference>
<dbReference type="PDBsum" id="3NFQ"/>
<dbReference type="PDBsum" id="3O8Z"/>
<dbReference type="PDBsum" id="3OAK"/>
<dbReference type="SMR" id="Q06505"/>
<dbReference type="BioGRID" id="36299">
    <property type="interactions" value="476"/>
</dbReference>
<dbReference type="DIP" id="DIP-3823N"/>
<dbReference type="FunCoup" id="Q06505">
    <property type="interactions" value="424"/>
</dbReference>
<dbReference type="IntAct" id="Q06505">
    <property type="interactions" value="29"/>
</dbReference>
<dbReference type="MINT" id="Q06505"/>
<dbReference type="STRING" id="4932.YPR133C"/>
<dbReference type="GlyGen" id="Q06505">
    <property type="glycosylation" value="2 sites, 1 O-linked glycan (1 site)"/>
</dbReference>
<dbReference type="iPTMnet" id="Q06505"/>
<dbReference type="PaxDb" id="4932-YPR133C"/>
<dbReference type="PeptideAtlas" id="Q06505"/>
<dbReference type="EnsemblFungi" id="YPR133C_mRNA">
    <property type="protein sequence ID" value="YPR133C"/>
    <property type="gene ID" value="YPR133C"/>
</dbReference>
<dbReference type="GeneID" id="856251"/>
<dbReference type="KEGG" id="sce:YPR133C"/>
<dbReference type="AGR" id="SGD:S000006337"/>
<dbReference type="SGD" id="S000006337">
    <property type="gene designation" value="SPN1"/>
</dbReference>
<dbReference type="VEuPathDB" id="FungiDB:YPR133C"/>
<dbReference type="eggNOG" id="KOG1793">
    <property type="taxonomic scope" value="Eukaryota"/>
</dbReference>
<dbReference type="GeneTree" id="ENSGT00940000169144"/>
<dbReference type="HOGENOM" id="CLU_045275_0_0_1"/>
<dbReference type="InParanoid" id="Q06505"/>
<dbReference type="OMA" id="TDYKFAP"/>
<dbReference type="OrthoDB" id="21124at2759"/>
<dbReference type="BioCyc" id="YEAST:G3O-34269-MONOMER"/>
<dbReference type="BioGRID-ORCS" id="856251">
    <property type="hits" value="1 hit in 10 CRISPR screens"/>
</dbReference>
<dbReference type="EvolutionaryTrace" id="Q06505"/>
<dbReference type="PRO" id="PR:Q06505"/>
<dbReference type="Proteomes" id="UP000002311">
    <property type="component" value="Chromosome XVI"/>
</dbReference>
<dbReference type="RNAct" id="Q06505">
    <property type="molecule type" value="protein"/>
</dbReference>
<dbReference type="GO" id="GO:0005634">
    <property type="term" value="C:nucleus"/>
    <property type="evidence" value="ECO:0000318"/>
    <property type="project" value="GO_Central"/>
</dbReference>
<dbReference type="GO" id="GO:0005665">
    <property type="term" value="C:RNA polymerase II, core complex"/>
    <property type="evidence" value="ECO:0000315"/>
    <property type="project" value="SGD"/>
</dbReference>
<dbReference type="GO" id="GO:0003682">
    <property type="term" value="F:chromatin binding"/>
    <property type="evidence" value="ECO:0000314"/>
    <property type="project" value="SGD"/>
</dbReference>
<dbReference type="GO" id="GO:0000993">
    <property type="term" value="F:RNA polymerase II complex binding"/>
    <property type="evidence" value="ECO:0000353"/>
    <property type="project" value="SGD"/>
</dbReference>
<dbReference type="GO" id="GO:0061629">
    <property type="term" value="F:RNA polymerase II-specific DNA-binding transcription factor binding"/>
    <property type="evidence" value="ECO:0000353"/>
    <property type="project" value="SGD"/>
</dbReference>
<dbReference type="GO" id="GO:0006334">
    <property type="term" value="P:nucleosome assembly"/>
    <property type="evidence" value="ECO:0000315"/>
    <property type="project" value="SGD"/>
</dbReference>
<dbReference type="GO" id="GO:0016973">
    <property type="term" value="P:poly(A)+ mRNA export from nucleus"/>
    <property type="evidence" value="ECO:0000315"/>
    <property type="project" value="SGD"/>
</dbReference>
<dbReference type="GO" id="GO:0006357">
    <property type="term" value="P:regulation of transcription by RNA polymerase II"/>
    <property type="evidence" value="ECO:0000316"/>
    <property type="project" value="SGD"/>
</dbReference>
<dbReference type="GO" id="GO:0034243">
    <property type="term" value="P:regulation of transcription elongation by RNA polymerase II"/>
    <property type="evidence" value="ECO:0000316"/>
    <property type="project" value="SGD"/>
</dbReference>
<dbReference type="FunFam" id="1.20.5.170:FF:000095">
    <property type="entry name" value="Transcription factor SPN1"/>
    <property type="match status" value="1"/>
</dbReference>
<dbReference type="FunFam" id="1.20.930.10:FF:000014">
    <property type="entry name" value="Transcription factor SPN1"/>
    <property type="match status" value="1"/>
</dbReference>
<dbReference type="Gene3D" id="1.20.5.170">
    <property type="match status" value="1"/>
</dbReference>
<dbReference type="Gene3D" id="1.20.930.10">
    <property type="entry name" value="Conserved domain common to transcription factors TFIIS, elongin A, CRSP70"/>
    <property type="match status" value="1"/>
</dbReference>
<dbReference type="IDEAL" id="IID50050"/>
<dbReference type="InterPro" id="IPR051037">
    <property type="entry name" value="RNAPII_TF_IWS1"/>
</dbReference>
<dbReference type="InterPro" id="IPR035441">
    <property type="entry name" value="TFIIS/LEDGF_dom_sf"/>
</dbReference>
<dbReference type="InterPro" id="IPR017923">
    <property type="entry name" value="TFIIS_N"/>
</dbReference>
<dbReference type="PANTHER" id="PTHR46010">
    <property type="entry name" value="PROTEIN IWS1 HOMOLOG"/>
    <property type="match status" value="1"/>
</dbReference>
<dbReference type="PANTHER" id="PTHR46010:SF1">
    <property type="entry name" value="PROTEIN IWS1 HOMOLOG"/>
    <property type="match status" value="1"/>
</dbReference>
<dbReference type="Pfam" id="PF08711">
    <property type="entry name" value="Med26"/>
    <property type="match status" value="1"/>
</dbReference>
<dbReference type="PROSITE" id="PS51319">
    <property type="entry name" value="TFIIS_N"/>
    <property type="match status" value="1"/>
</dbReference>
<gene>
    <name type="primary">SPN1</name>
    <name type="synonym">IWS1</name>
    <name type="ordered locus">YPR133C</name>
</gene>
<protein>
    <recommendedName>
        <fullName>Transcription factor SPN1</fullName>
    </recommendedName>
    <alternativeName>
        <fullName>Interacts with SPT6 protein 1</fullName>
    </alternativeName>
    <alternativeName>
        <fullName>Suppresses postrecruitment functions protein 1</fullName>
    </alternativeName>
</protein>
<feature type="chain" id="PRO_0000083366" description="Transcription factor SPN1">
    <location>
        <begin position="1"/>
        <end position="410"/>
    </location>
</feature>
<feature type="domain" description="TFIIS N-terminal" evidence="1">
    <location>
        <begin position="219"/>
        <end position="296"/>
    </location>
</feature>
<feature type="region of interest" description="Disordered" evidence="2">
    <location>
        <begin position="1"/>
        <end position="132"/>
    </location>
</feature>
<feature type="region of interest" description="Disordered" evidence="2">
    <location>
        <begin position="318"/>
        <end position="346"/>
    </location>
</feature>
<feature type="compositionally biased region" description="Polar residues" evidence="2">
    <location>
        <begin position="20"/>
        <end position="52"/>
    </location>
</feature>
<feature type="compositionally biased region" description="Basic and acidic residues" evidence="2">
    <location>
        <begin position="53"/>
        <end position="65"/>
    </location>
</feature>
<feature type="modified residue" description="Phosphothreonine" evidence="12">
    <location>
        <position position="15"/>
    </location>
</feature>
<feature type="modified residue" description="Phosphoserine; by ATM or ATR" evidence="10 12">
    <location>
        <position position="23"/>
    </location>
</feature>
<feature type="modified residue" description="Phosphoserine" evidence="11">
    <location>
        <position position="40"/>
    </location>
</feature>
<feature type="modified residue" description="Phosphoserine" evidence="12">
    <location>
        <position position="85"/>
    </location>
</feature>
<feature type="modified residue" description="Phosphothreonine" evidence="12">
    <location>
        <position position="86"/>
    </location>
</feature>
<feature type="modified residue" description="Phosphoserine" evidence="3 9 10 11 12">
    <location>
        <position position="89"/>
    </location>
</feature>
<feature type="mutagenesis site" description="Suppresses postrecruitment-defective SPT15/TBP alleles." evidence="4">
    <original>K</original>
    <variation>N</variation>
    <location>
        <position position="192"/>
    </location>
</feature>
<feature type="helix" evidence="13">
    <location>
        <begin position="150"/>
        <end position="182"/>
    </location>
</feature>
<feature type="helix" evidence="13">
    <location>
        <begin position="191"/>
        <end position="203"/>
    </location>
</feature>
<feature type="helix" evidence="13">
    <location>
        <begin position="206"/>
        <end position="208"/>
    </location>
</feature>
<feature type="helix" evidence="13">
    <location>
        <begin position="209"/>
        <end position="214"/>
    </location>
</feature>
<feature type="helix" evidence="13">
    <location>
        <begin position="217"/>
        <end position="225"/>
    </location>
</feature>
<feature type="helix" evidence="13">
    <location>
        <begin position="236"/>
        <end position="247"/>
    </location>
</feature>
<feature type="helix" evidence="13">
    <location>
        <begin position="253"/>
        <end position="259"/>
    </location>
</feature>
<feature type="helix" evidence="13">
    <location>
        <begin position="261"/>
        <end position="270"/>
    </location>
</feature>
<feature type="strand" evidence="14">
    <location>
        <begin position="272"/>
        <end position="274"/>
    </location>
</feature>
<feature type="helix" evidence="13">
    <location>
        <begin position="276"/>
        <end position="289"/>
    </location>
</feature>
<name>IWS1_YEAST</name>
<proteinExistence type="evidence at protein level"/>
<organism>
    <name type="scientific">Saccharomyces cerevisiae (strain ATCC 204508 / S288c)</name>
    <name type="common">Baker's yeast</name>
    <dbReference type="NCBI Taxonomy" id="559292"/>
    <lineage>
        <taxon>Eukaryota</taxon>
        <taxon>Fungi</taxon>
        <taxon>Dikarya</taxon>
        <taxon>Ascomycota</taxon>
        <taxon>Saccharomycotina</taxon>
        <taxon>Saccharomycetes</taxon>
        <taxon>Saccharomycetales</taxon>
        <taxon>Saccharomycetaceae</taxon>
        <taxon>Saccharomyces</taxon>
    </lineage>
</organism>
<accession>Q06505</accession>
<accession>D6W4C9</accession>
<keyword id="KW-0002">3D-structure</keyword>
<keyword id="KW-0539">Nucleus</keyword>
<keyword id="KW-0597">Phosphoprotein</keyword>
<keyword id="KW-1185">Reference proteome</keyword>
<keyword id="KW-0804">Transcription</keyword>
<keyword id="KW-0805">Transcription regulation</keyword>
<reference key="1">
    <citation type="journal article" date="1997" name="Nature">
        <title>The nucleotide sequence of Saccharomyces cerevisiae chromosome XVI.</title>
        <authorList>
            <person name="Bussey H."/>
            <person name="Storms R.K."/>
            <person name="Ahmed A."/>
            <person name="Albermann K."/>
            <person name="Allen E."/>
            <person name="Ansorge W."/>
            <person name="Araujo R."/>
            <person name="Aparicio A."/>
            <person name="Barrell B.G."/>
            <person name="Badcock K."/>
            <person name="Benes V."/>
            <person name="Botstein D."/>
            <person name="Bowman S."/>
            <person name="Brueckner M."/>
            <person name="Carpenter J."/>
            <person name="Cherry J.M."/>
            <person name="Chung E."/>
            <person name="Churcher C.M."/>
            <person name="Coster F."/>
            <person name="Davis K."/>
            <person name="Davis R.W."/>
            <person name="Dietrich F.S."/>
            <person name="Delius H."/>
            <person name="DiPaolo T."/>
            <person name="Dubois E."/>
            <person name="Duesterhoeft A."/>
            <person name="Duncan M."/>
            <person name="Floeth M."/>
            <person name="Fortin N."/>
            <person name="Friesen J.D."/>
            <person name="Fritz C."/>
            <person name="Goffeau A."/>
            <person name="Hall J."/>
            <person name="Hebling U."/>
            <person name="Heumann K."/>
            <person name="Hilbert H."/>
            <person name="Hillier L.W."/>
            <person name="Hunicke-Smith S."/>
            <person name="Hyman R.W."/>
            <person name="Johnston M."/>
            <person name="Kalman S."/>
            <person name="Kleine K."/>
            <person name="Komp C."/>
            <person name="Kurdi O."/>
            <person name="Lashkari D."/>
            <person name="Lew H."/>
            <person name="Lin A."/>
            <person name="Lin D."/>
            <person name="Louis E.J."/>
            <person name="Marathe R."/>
            <person name="Messenguy F."/>
            <person name="Mewes H.-W."/>
            <person name="Mirtipati S."/>
            <person name="Moestl D."/>
            <person name="Mueller-Auer S."/>
            <person name="Namath A."/>
            <person name="Nentwich U."/>
            <person name="Oefner P."/>
            <person name="Pearson D."/>
            <person name="Petel F.X."/>
            <person name="Pohl T.M."/>
            <person name="Purnelle B."/>
            <person name="Rajandream M.A."/>
            <person name="Rechmann S."/>
            <person name="Rieger M."/>
            <person name="Riles L."/>
            <person name="Roberts D."/>
            <person name="Schaefer M."/>
            <person name="Scharfe M."/>
            <person name="Scherens B."/>
            <person name="Schramm S."/>
            <person name="Schroeder M."/>
            <person name="Sdicu A.-M."/>
            <person name="Tettelin H."/>
            <person name="Urrestarazu L.A."/>
            <person name="Ushinsky S."/>
            <person name="Vierendeels F."/>
            <person name="Vissers S."/>
            <person name="Voss H."/>
            <person name="Walsh S.V."/>
            <person name="Wambutt R."/>
            <person name="Wang Y."/>
            <person name="Wedler E."/>
            <person name="Wedler H."/>
            <person name="Winnett E."/>
            <person name="Zhong W.-W."/>
            <person name="Zollner A."/>
            <person name="Vo D.H."/>
            <person name="Hani J."/>
        </authorList>
    </citation>
    <scope>NUCLEOTIDE SEQUENCE [LARGE SCALE GENOMIC DNA]</scope>
    <source>
        <strain>ATCC 204508 / S288c</strain>
    </source>
</reference>
<reference key="2">
    <citation type="journal article" date="2014" name="G3 (Bethesda)">
        <title>The reference genome sequence of Saccharomyces cerevisiae: Then and now.</title>
        <authorList>
            <person name="Engel S.R."/>
            <person name="Dietrich F.S."/>
            <person name="Fisk D.G."/>
            <person name="Binkley G."/>
            <person name="Balakrishnan R."/>
            <person name="Costanzo M.C."/>
            <person name="Dwight S.S."/>
            <person name="Hitz B.C."/>
            <person name="Karra K."/>
            <person name="Nash R.S."/>
            <person name="Weng S."/>
            <person name="Wong E.D."/>
            <person name="Lloyd P."/>
            <person name="Skrzypek M.S."/>
            <person name="Miyasato S.R."/>
            <person name="Simison M."/>
            <person name="Cherry J.M."/>
        </authorList>
    </citation>
    <scope>GENOME REANNOTATION</scope>
    <source>
        <strain>ATCC 204508 / S288c</strain>
    </source>
</reference>
<reference key="3">
    <citation type="journal article" date="2007" name="Genome Res.">
        <title>Approaching a complete repository of sequence-verified protein-encoding clones for Saccharomyces cerevisiae.</title>
        <authorList>
            <person name="Hu Y."/>
            <person name="Rolfs A."/>
            <person name="Bhullar B."/>
            <person name="Murthy T.V.S."/>
            <person name="Zhu C."/>
            <person name="Berger M.F."/>
            <person name="Camargo A.A."/>
            <person name="Kelley F."/>
            <person name="McCarron S."/>
            <person name="Jepson D."/>
            <person name="Richardson A."/>
            <person name="Raphael J."/>
            <person name="Moreira D."/>
            <person name="Taycher E."/>
            <person name="Zuo D."/>
            <person name="Mohr S."/>
            <person name="Kane M.F."/>
            <person name="Williamson J."/>
            <person name="Simpson A.J.G."/>
            <person name="Bulyk M.L."/>
            <person name="Harlow E."/>
            <person name="Marsischky G."/>
            <person name="Kolodner R.D."/>
            <person name="LaBaer J."/>
        </authorList>
    </citation>
    <scope>NUCLEOTIDE SEQUENCE [GENOMIC DNA]</scope>
    <source>
        <strain>ATCC 204508 / S288c</strain>
    </source>
</reference>
<reference key="4">
    <citation type="journal article" date="2002" name="Genetics">
        <title>SPN1, a conserved gene identified by suppression of a postrecruitment-defective yeast TATA-binding protein mutant.</title>
        <authorList>
            <person name="Fischbeck J.A."/>
            <person name="Kraemer S.M."/>
            <person name="Stargell L.A."/>
        </authorList>
    </citation>
    <scope>FUNCTION</scope>
    <scope>MUTAGENESIS OF LYS-192</scope>
</reference>
<reference key="5">
    <citation type="journal article" date="2002" name="Mol. Cell. Biol.">
        <title>RNA polymerase II elongation factors of Saccharomyces cerevisiae: a targeted proteomics approach.</title>
        <authorList>
            <person name="Krogan N.J."/>
            <person name="Kim M."/>
            <person name="Ahn S.H."/>
            <person name="Zhong G."/>
            <person name="Kobor M.S."/>
            <person name="Cagney G."/>
            <person name="Emili A."/>
            <person name="Shilatifard A."/>
            <person name="Buratowski S."/>
            <person name="Greenblatt J.F."/>
        </authorList>
    </citation>
    <scope>INTERACTION WITH SPT6</scope>
    <scope>PHOSPHORYLATION AT SER-89</scope>
</reference>
<reference key="6">
    <citation type="journal article" date="2003" name="Mol. Cell. Biol.">
        <title>Dual roles for Spt5 in pre-mRNA processing and transcription elongation revealed by identification of Spt5-associated proteins.</title>
        <authorList>
            <person name="Lindstrom D.L."/>
            <person name="Squazzo S.L."/>
            <person name="Muster N."/>
            <person name="Burckin T.A."/>
            <person name="Wachter K.C."/>
            <person name="Emigh C.A."/>
            <person name="McCleery J.A."/>
            <person name="Yates J.R. III"/>
            <person name="Hartzog G.A."/>
        </authorList>
    </citation>
    <scope>FUNCTION</scope>
    <scope>IDENTIFICATION BY MASS SPECTROMETRY</scope>
    <scope>INTERACTION WITH ABD1; RBP1; SPT5 AND SPT6</scope>
</reference>
<reference key="7">
    <citation type="journal article" date="2003" name="Nature">
        <title>Global analysis of protein localization in budding yeast.</title>
        <authorList>
            <person name="Huh W.-K."/>
            <person name="Falvo J.V."/>
            <person name="Gerke L.C."/>
            <person name="Carroll A.S."/>
            <person name="Howson R.W."/>
            <person name="Weissman J.S."/>
            <person name="O'Shea E.K."/>
        </authorList>
    </citation>
    <scope>SUBCELLULAR LOCATION [LARGE SCALE ANALYSIS]</scope>
</reference>
<reference key="8">
    <citation type="journal article" date="2003" name="Nature">
        <title>Global analysis of protein expression in yeast.</title>
        <authorList>
            <person name="Ghaemmaghami S."/>
            <person name="Huh W.-K."/>
            <person name="Bower K."/>
            <person name="Howson R.W."/>
            <person name="Belle A."/>
            <person name="Dephoure N."/>
            <person name="O'Shea E.K."/>
            <person name="Weissman J.S."/>
        </authorList>
    </citation>
    <scope>LEVEL OF PROTEIN EXPRESSION [LARGE SCALE ANALYSIS]</scope>
</reference>
<reference key="9">
    <citation type="journal article" date="2007" name="J. Proteome Res.">
        <title>Large-scale phosphorylation analysis of alpha-factor-arrested Saccharomyces cerevisiae.</title>
        <authorList>
            <person name="Li X."/>
            <person name="Gerber S.A."/>
            <person name="Rudner A.D."/>
            <person name="Beausoleil S.A."/>
            <person name="Haas W."/>
            <person name="Villen J."/>
            <person name="Elias J.E."/>
            <person name="Gygi S.P."/>
        </authorList>
    </citation>
    <scope>PHOSPHORYLATION [LARGE SCALE ANALYSIS] AT SER-23 AND SER-89</scope>
    <scope>IDENTIFICATION BY MASS SPECTROMETRY [LARGE SCALE ANALYSIS]</scope>
    <source>
        <strain>ADR376</strain>
    </source>
</reference>
<reference key="10">
    <citation type="journal article" date="2007" name="Proc. Natl. Acad. Sci. U.S.A.">
        <title>Analysis of phosphorylation sites on proteins from Saccharomyces cerevisiae by electron transfer dissociation (ETD) mass spectrometry.</title>
        <authorList>
            <person name="Chi A."/>
            <person name="Huttenhower C."/>
            <person name="Geer L.Y."/>
            <person name="Coon J.J."/>
            <person name="Syka J.E.P."/>
            <person name="Bai D.L."/>
            <person name="Shabanowitz J."/>
            <person name="Burke D.J."/>
            <person name="Troyanskaya O.G."/>
            <person name="Hunt D.F."/>
        </authorList>
    </citation>
    <scope>PHOSPHORYLATION [LARGE SCALE ANALYSIS] AT SER-89</scope>
    <scope>IDENTIFICATION BY MASS SPECTROMETRY [LARGE SCALE ANALYSIS]</scope>
</reference>
<reference key="11">
    <citation type="journal article" date="2008" name="Mol. Cell. Proteomics">
        <title>A multidimensional chromatography technology for in-depth phosphoproteome analysis.</title>
        <authorList>
            <person name="Albuquerque C.P."/>
            <person name="Smolka M.B."/>
            <person name="Payne S.H."/>
            <person name="Bafna V."/>
            <person name="Eng J."/>
            <person name="Zhou H."/>
        </authorList>
    </citation>
    <scope>PHOSPHORYLATION [LARGE SCALE ANALYSIS] AT SER-40 AND SER-89</scope>
    <scope>IDENTIFICATION BY MASS SPECTROMETRY [LARGE SCALE ANALYSIS]</scope>
</reference>
<reference key="12">
    <citation type="journal article" date="2009" name="Science">
        <title>Global analysis of Cdk1 substrate phosphorylation sites provides insights into evolution.</title>
        <authorList>
            <person name="Holt L.J."/>
            <person name="Tuch B.B."/>
            <person name="Villen J."/>
            <person name="Johnson A.D."/>
            <person name="Gygi S.P."/>
            <person name="Morgan D.O."/>
        </authorList>
    </citation>
    <scope>PHOSPHORYLATION [LARGE SCALE ANALYSIS] AT THR-15; SER-23; SER-85; THR-86 AND SER-89</scope>
    <scope>IDENTIFICATION BY MASS SPECTROMETRY [LARGE SCALE ANALYSIS]</scope>
</reference>
<comment type="function">
    <text evidence="4 5">Transcription factor involved in RNA polymerase II transcription regulation. May function in both SPT15/TBP post-recruitment and recruitment steps of transcription.</text>
</comment>
<comment type="subunit">
    <text evidence="3 5">Interacts with ABD1, RBP1, SPT5 and SPT6.</text>
</comment>
<comment type="interaction">
    <interactant intactId="EBI-32596">
        <id>Q06505</id>
    </interactant>
    <interactant intactId="EBI-26919">
        <id>P36053</id>
        <label>ELF1</label>
    </interactant>
    <organismsDiffer>false</organismsDiffer>
    <experiments>2</experiments>
</comment>
<comment type="interaction">
    <interactant intactId="EBI-32596">
        <id>Q06505</id>
    </interactant>
    <interactant intactId="EBI-15767">
        <id>P08518</id>
        <label>RPB2</label>
    </interactant>
    <organismsDiffer>false</organismsDiffer>
    <experiments>3</experiments>
</comment>
<comment type="interaction">
    <interactant intactId="EBI-32596">
        <id>Q06505</id>
    </interactant>
    <interactant intactId="EBI-15773">
        <id>P16370</id>
        <label>RPB3</label>
    </interactant>
    <organismsDiffer>false</organismsDiffer>
    <experiments>2</experiments>
</comment>
<comment type="interaction">
    <interactant intactId="EBI-32596">
        <id>Q06505</id>
    </interactant>
    <interactant intactId="EBI-17947">
        <id>P23615</id>
        <label>SPT6</label>
    </interactant>
    <organismsDiffer>false</organismsDiffer>
    <experiments>8</experiments>
</comment>
<comment type="subcellular location">
    <subcellularLocation>
        <location evidence="1 6">Nucleus</location>
    </subcellularLocation>
</comment>
<comment type="miscellaneous">
    <text evidence="7">Present with 2830 molecules/cell in log phase SD medium.</text>
</comment>
<comment type="similarity">
    <text evidence="8">Belongs to the IWS1 family.</text>
</comment>
<sequence length="410" mass="46082">MSTADQEQPKVVEATPEDGTASSQKSTINAENENTKQNQSMEPQETSKGTSNDTKDPDNGEKNEEAAIDENSNVEAAERKRKHISTDFSDDDLEKEEHNDQSLQPTVENRASKDRDSSATPSSRQELEEKLDRILKKPKVRRTRRDEDDLEQYLDEKILRLKDEMNIAAQLDIDTLNKRIETGDTSLIAMQKVKLLPKVVSVLSKANLADTILDNNLLQSVRIWLEPLPDGSLPSFEIQKSLFAALNDLPVKTEHLKESGLGRVVIFYTKSKRVEAQLARLAEKLIAEWTRPIIGASDNYRDKRIMQLEFDSEKLRKKSVMDSAKNRKKKSKSGEDPTSRGSSVQTLYEQAAARRNRAAAPAQTTTDYKYAPVSNLSAVPTNARAVGVGSTLNNSEMYKRLTSRLNKKHK</sequence>